<dbReference type="EMBL" id="BA000002">
    <property type="protein sequence ID" value="BAA79939.1"/>
    <property type="molecule type" value="Genomic_DNA"/>
</dbReference>
<dbReference type="PIR" id="C72692">
    <property type="entry name" value="C72692"/>
</dbReference>
<dbReference type="RefSeq" id="WP_010866093.1">
    <property type="nucleotide sequence ID" value="NC_000854.2"/>
</dbReference>
<dbReference type="PDB" id="1ORQ">
    <property type="method" value="X-ray"/>
    <property type="resolution" value="3.20 A"/>
    <property type="chains" value="C=31-253"/>
</dbReference>
<dbReference type="PDB" id="1ORS">
    <property type="method" value="X-ray"/>
    <property type="resolution" value="1.90 A"/>
    <property type="chains" value="C=33-161"/>
</dbReference>
<dbReference type="PDB" id="2A0L">
    <property type="method" value="X-ray"/>
    <property type="resolution" value="3.90 A"/>
    <property type="chains" value="A/B=20-259"/>
</dbReference>
<dbReference type="PDB" id="2KYH">
    <property type="method" value="NMR"/>
    <property type="chains" value="A=18-160"/>
</dbReference>
<dbReference type="PDB" id="6UWM">
    <property type="method" value="EM"/>
    <property type="resolution" value="5.90 A"/>
    <property type="chains" value="A/B/C/D=25-295"/>
</dbReference>
<dbReference type="PDBsum" id="1ORQ"/>
<dbReference type="PDBsum" id="1ORS"/>
<dbReference type="PDBsum" id="2A0L"/>
<dbReference type="PDBsum" id="2KYH"/>
<dbReference type="PDBsum" id="6UWM"/>
<dbReference type="BMRB" id="Q9YDF8"/>
<dbReference type="EMDB" id="EMD-20924"/>
<dbReference type="SMR" id="Q9YDF8"/>
<dbReference type="DIP" id="DIP-29648N"/>
<dbReference type="STRING" id="272557.APE_0955"/>
<dbReference type="TCDB" id="1.A.1.17.1">
    <property type="family name" value="the voltage-gated ion channel (vic) superfamily"/>
</dbReference>
<dbReference type="ABCD" id="Q9YDF8">
    <property type="antibodies" value="2 sequenced antibodies"/>
</dbReference>
<dbReference type="EnsemblBacteria" id="BAA79939">
    <property type="protein sequence ID" value="BAA79939"/>
    <property type="gene ID" value="APE_0955"/>
</dbReference>
<dbReference type="GeneID" id="1445031"/>
<dbReference type="KEGG" id="ape:APE_0955"/>
<dbReference type="eggNOG" id="arCOG01964">
    <property type="taxonomic scope" value="Archaea"/>
</dbReference>
<dbReference type="EvolutionaryTrace" id="Q9YDF8"/>
<dbReference type="Proteomes" id="UP000002518">
    <property type="component" value="Chromosome"/>
</dbReference>
<dbReference type="GO" id="GO:0008076">
    <property type="term" value="C:voltage-gated potassium channel complex"/>
    <property type="evidence" value="ECO:0007669"/>
    <property type="project" value="InterPro"/>
</dbReference>
<dbReference type="GO" id="GO:0042802">
    <property type="term" value="F:identical protein binding"/>
    <property type="evidence" value="ECO:0000353"/>
    <property type="project" value="IntAct"/>
</dbReference>
<dbReference type="GO" id="GO:0005249">
    <property type="term" value="F:voltage-gated potassium channel activity"/>
    <property type="evidence" value="ECO:0007669"/>
    <property type="project" value="InterPro"/>
</dbReference>
<dbReference type="GO" id="GO:0001508">
    <property type="term" value="P:action potential"/>
    <property type="evidence" value="ECO:0007669"/>
    <property type="project" value="TreeGrafter"/>
</dbReference>
<dbReference type="Gene3D" id="1.10.287.70">
    <property type="match status" value="1"/>
</dbReference>
<dbReference type="InterPro" id="IPR005821">
    <property type="entry name" value="Ion_trans_dom"/>
</dbReference>
<dbReference type="InterPro" id="IPR028325">
    <property type="entry name" value="VG_K_chnl"/>
</dbReference>
<dbReference type="PANTHER" id="PTHR11537:SF254">
    <property type="entry name" value="POTASSIUM VOLTAGE-GATED CHANNEL PROTEIN SHAB"/>
    <property type="match status" value="1"/>
</dbReference>
<dbReference type="PANTHER" id="PTHR11537">
    <property type="entry name" value="VOLTAGE-GATED POTASSIUM CHANNEL"/>
    <property type="match status" value="1"/>
</dbReference>
<dbReference type="Pfam" id="PF00520">
    <property type="entry name" value="Ion_trans"/>
    <property type="match status" value="1"/>
</dbReference>
<dbReference type="SUPFAM" id="SSF81324">
    <property type="entry name" value="Voltage-gated potassium channels"/>
    <property type="match status" value="1"/>
</dbReference>
<proteinExistence type="evidence at protein level"/>
<sequence>MSVERWVFPGCSVMARFRRGLSDLGGRVRNIGDVMEHPLVELGVSYAALLSVIVVVVEYTMQLSGEYLVRLYLVDLILVIILWADYAYRAYKSGDPAGYVKKTLYEIPALVPAGLLALIEGHLAGLGLFRLVRLLRFLRILLIISRGSKFLSAIADAADKIRFYHLFGAVMLTVLYGAFAIYIVEYPDPNSSIKSVFDALWWAVVTATTVGYGDVVPATPIGKVIGIAVMLTGISALTLLIGTVSNMFQKILVGEPEPSCSPAKLAEMVSSMSEEEFEEFVRTLKNLRRLENSMK</sequence>
<protein>
    <recommendedName>
        <fullName>Voltage-gated potassium channel</fullName>
    </recommendedName>
    <alternativeName>
        <fullName>KvAP</fullName>
    </alternativeName>
</protein>
<keyword id="KW-0002">3D-structure</keyword>
<keyword id="KW-1003">Cell membrane</keyword>
<keyword id="KW-0407">Ion channel</keyword>
<keyword id="KW-0406">Ion transport</keyword>
<keyword id="KW-0472">Membrane</keyword>
<keyword id="KW-0630">Potassium</keyword>
<keyword id="KW-0631">Potassium channel</keyword>
<keyword id="KW-0633">Potassium transport</keyword>
<keyword id="KW-1185">Reference proteome</keyword>
<keyword id="KW-0812">Transmembrane</keyword>
<keyword id="KW-1133">Transmembrane helix</keyword>
<keyword id="KW-0813">Transport</keyword>
<keyword id="KW-0851">Voltage-gated channel</keyword>
<organism>
    <name type="scientific">Aeropyrum pernix (strain ATCC 700893 / DSM 11879 / JCM 9820 / NBRC 100138 / K1)</name>
    <dbReference type="NCBI Taxonomy" id="272557"/>
    <lineage>
        <taxon>Archaea</taxon>
        <taxon>Thermoproteota</taxon>
        <taxon>Thermoprotei</taxon>
        <taxon>Desulfurococcales</taxon>
        <taxon>Desulfurococcaceae</taxon>
        <taxon>Aeropyrum</taxon>
    </lineage>
</organism>
<feature type="chain" id="PRO_0000054097" description="Voltage-gated potassium channel">
    <location>
        <begin position="1"/>
        <end position="295"/>
    </location>
</feature>
<feature type="topological domain" description="Cytoplasmic">
    <location>
        <begin position="1"/>
        <end position="38"/>
    </location>
</feature>
<feature type="transmembrane region" description="Helical; Name=Segment S1">
    <location>
        <begin position="39"/>
        <end position="63"/>
    </location>
</feature>
<feature type="topological domain" description="Extracellular" evidence="1">
    <location>
        <begin position="64"/>
        <end position="67"/>
    </location>
</feature>
<feature type="transmembrane region" description="Helical; Name=Segment S2">
    <location>
        <begin position="68"/>
        <end position="92"/>
    </location>
</feature>
<feature type="topological domain" description="Cytoplasmic">
    <location>
        <begin position="93"/>
        <end position="96"/>
    </location>
</feature>
<feature type="intramembrane region" description="Helical; Name=Segment S3A">
    <location>
        <begin position="97"/>
        <end position="105"/>
    </location>
</feature>
<feature type="topological domain" description="Extracellular" evidence="1">
    <location>
        <begin position="106"/>
        <end position="108"/>
    </location>
</feature>
<feature type="transmembrane region" description="Helical; Voltage-sensor; Name=Segment S3B">
    <location>
        <begin position="109"/>
        <end position="125"/>
    </location>
</feature>
<feature type="topological domain" description="Cytoplasmic">
    <location>
        <begin position="126"/>
        <end position="128"/>
    </location>
</feature>
<feature type="transmembrane region" description="Helical; Voltage-sensor; Name=Segment S4">
    <location>
        <begin position="129"/>
        <end position="145"/>
    </location>
</feature>
<feature type="topological domain" description="Cytoplasmic">
    <location>
        <begin position="146"/>
        <end position="159"/>
    </location>
</feature>
<feature type="transmembrane region" description="Helical; Name=Segment S5">
    <location>
        <begin position="160"/>
        <end position="184"/>
    </location>
</feature>
<feature type="topological domain" description="Extracellular" evidence="1">
    <location>
        <begin position="185"/>
        <end position="195"/>
    </location>
</feature>
<feature type="intramembrane region" description="Pore-forming" evidence="1">
    <location>
        <begin position="196"/>
        <end position="208"/>
    </location>
</feature>
<feature type="topological domain" description="Extracellular" evidence="1">
    <location>
        <begin position="209"/>
        <end position="221"/>
    </location>
</feature>
<feature type="transmembrane region" description="Helical; Name=Segment S6">
    <location>
        <begin position="222"/>
        <end position="253"/>
    </location>
</feature>
<feature type="topological domain" description="Cytoplasmic">
    <location>
        <begin position="254"/>
        <end position="295"/>
    </location>
</feature>
<feature type="short sequence motif" description="Selectivity filter">
    <location>
        <begin position="209"/>
        <end position="214"/>
    </location>
</feature>
<feature type="turn" evidence="4">
    <location>
        <begin position="32"/>
        <end position="34"/>
    </location>
</feature>
<feature type="helix" evidence="5">
    <location>
        <begin position="38"/>
        <end position="60"/>
    </location>
</feature>
<feature type="helix" evidence="5">
    <location>
        <begin position="66"/>
        <end position="92"/>
    </location>
</feature>
<feature type="turn" evidence="5">
    <location>
        <begin position="96"/>
        <end position="102"/>
    </location>
</feature>
<feature type="helix" evidence="5">
    <location>
        <begin position="104"/>
        <end position="106"/>
    </location>
</feature>
<feature type="helix" evidence="5">
    <location>
        <begin position="108"/>
        <end position="110"/>
    </location>
</feature>
<feature type="helix" evidence="5">
    <location>
        <begin position="113"/>
        <end position="125"/>
    </location>
</feature>
<feature type="helix" evidence="5">
    <location>
        <begin position="129"/>
        <end position="161"/>
    </location>
</feature>
<feature type="strand" evidence="4">
    <location>
        <begin position="186"/>
        <end position="188"/>
    </location>
</feature>
<feature type="helix" evidence="4">
    <location>
        <begin position="196"/>
        <end position="207"/>
    </location>
</feature>
<feature type="helix" evidence="4">
    <location>
        <begin position="220"/>
        <end position="251"/>
    </location>
</feature>
<comment type="function">
    <text evidence="2">Mediates a strong voltage-dependent potassium ion permeability of excitable membranes. Assuming opened or closed conformations in response to the voltage difference across the membrane, the protein forms a potassium-selective channel through which potassium ions may pass in accordance with their electrochemical gradient.</text>
</comment>
<comment type="interaction">
    <interactant intactId="EBI-15692219">
        <id>Q9YDF8</id>
    </interactant>
    <interactant intactId="EBI-15692219">
        <id>Q9YDF8</id>
        <label>APE_0955</label>
    </interactant>
    <organismsDiffer>false</organismsDiffer>
    <experiments>2</experiments>
</comment>
<comment type="subcellular location">
    <subcellularLocation>
        <location>Cell membrane</location>
        <topology>Multi-pass membrane protein</topology>
    </subcellularLocation>
</comment>
<comment type="domain">
    <text>Contains a central ion-conduction pore surrounded by four voltage sensors which form the voltage-sensor paddles that move in response to membrane voltage changes through the fluid membrane interior, each voltage-sensor carrying their four positive charges across the membrane. It is thought that the S4 arginine residues move through the membrane's electric field to open the pore.</text>
</comment>
<comment type="similarity">
    <text evidence="3">Belongs to the potassium channel family.</text>
</comment>
<reference key="1">
    <citation type="journal article" date="1999" name="DNA Res.">
        <title>Complete genome sequence of an aerobic hyper-thermophilic crenarchaeon, Aeropyrum pernix K1.</title>
        <authorList>
            <person name="Kawarabayasi Y."/>
            <person name="Hino Y."/>
            <person name="Horikawa H."/>
            <person name="Yamazaki S."/>
            <person name="Haikawa Y."/>
            <person name="Jin-no K."/>
            <person name="Takahashi M."/>
            <person name="Sekine M."/>
            <person name="Baba S."/>
            <person name="Ankai A."/>
            <person name="Kosugi H."/>
            <person name="Hosoyama A."/>
            <person name="Fukui S."/>
            <person name="Nagai Y."/>
            <person name="Nishijima K."/>
            <person name="Nakazawa H."/>
            <person name="Takamiya M."/>
            <person name="Masuda S."/>
            <person name="Funahashi T."/>
            <person name="Tanaka T."/>
            <person name="Kudoh Y."/>
            <person name="Yamazaki J."/>
            <person name="Kushida N."/>
            <person name="Oguchi A."/>
            <person name="Aoki K."/>
            <person name="Kubota K."/>
            <person name="Nakamura Y."/>
            <person name="Nomura N."/>
            <person name="Sako Y."/>
            <person name="Kikuchi H."/>
        </authorList>
    </citation>
    <scope>NUCLEOTIDE SEQUENCE [LARGE SCALE GENOMIC DNA]</scope>
    <source>
        <strain>ATCC 700893 / DSM 11879 / JCM 9820 / NBRC 100138 / K1</strain>
    </source>
</reference>
<reference key="2">
    <citation type="journal article" date="2003" name="Nature">
        <title>Functional analysis of an archaebacterial voltage-dependent K+ channel.</title>
        <authorList>
            <person name="Ruta V."/>
            <person name="Jiang Y."/>
            <person name="Lee A."/>
            <person name="Chen J."/>
            <person name="MacKinnon R."/>
        </authorList>
    </citation>
    <scope>FUNCTION</scope>
</reference>
<reference key="3">
    <citation type="journal article" date="2003" name="Nature">
        <title>X-ray structure of a voltage-dependent K(+) channel.</title>
        <authorList>
            <person name="Jiang Y."/>
            <person name="Lee A."/>
            <person name="Chen J."/>
            <person name="Ruta V."/>
            <person name="Cadene M."/>
            <person name="Chait B.T."/>
            <person name="MacKinnon R."/>
        </authorList>
    </citation>
    <scope>X-RAY CRYSTALLOGRAPHY (1.9 ANGSTROMS) OF 31-253</scope>
</reference>
<name>KVAP_AERPE</name>
<gene>
    <name type="ordered locus">APE_0955</name>
</gene>
<accession>Q9YDF8</accession>
<evidence type="ECO:0000255" key="1"/>
<evidence type="ECO:0000269" key="2">
    <source>
    </source>
</evidence>
<evidence type="ECO:0000305" key="3"/>
<evidence type="ECO:0007829" key="4">
    <source>
        <dbReference type="PDB" id="1ORQ"/>
    </source>
</evidence>
<evidence type="ECO:0007829" key="5">
    <source>
        <dbReference type="PDB" id="1ORS"/>
    </source>
</evidence>